<feature type="chain" id="PRO_0000064397" description="Protein 6b">
    <location>
        <begin position="1"/>
        <end position="206"/>
    </location>
</feature>
<feature type="region of interest" description="Disordered" evidence="1">
    <location>
        <begin position="162"/>
        <end position="182"/>
    </location>
</feature>
<feature type="compositionally biased region" description="Acidic residues" evidence="1">
    <location>
        <begin position="165"/>
        <end position="182"/>
    </location>
</feature>
<dbReference type="EMBL" id="M91608">
    <property type="protein sequence ID" value="AAA25043.1"/>
    <property type="molecule type" value="Genomic_DNA"/>
</dbReference>
<dbReference type="EMBL" id="CP000637">
    <property type="protein sequence ID" value="ACM39697.1"/>
    <property type="molecule type" value="Genomic_DNA"/>
</dbReference>
<dbReference type="PIR" id="S30108">
    <property type="entry name" value="S30108"/>
</dbReference>
<dbReference type="RefSeq" id="WP_012649056.1">
    <property type="nucleotide sequence ID" value="NC_011982.1"/>
</dbReference>
<dbReference type="SMR" id="Q04551"/>
<dbReference type="KEGG" id="avi:Avi_8269"/>
<dbReference type="HOGENOM" id="CLU_1329633_0_0_5"/>
<dbReference type="Proteomes" id="UP000001596">
    <property type="component" value="Plasmid pTiS4"/>
</dbReference>
<dbReference type="InterPro" id="IPR006064">
    <property type="entry name" value="Glycosidase"/>
</dbReference>
<dbReference type="Pfam" id="PF02027">
    <property type="entry name" value="RolB_RolC"/>
    <property type="match status" value="1"/>
</dbReference>
<comment type="function">
    <text>Involved in tumor formation and increases auxin and cytokinin effects in host plants.</text>
</comment>
<proteinExistence type="predicted"/>
<keyword id="KW-0192">Crown gall tumor</keyword>
<keyword id="KW-0614">Plasmid</keyword>
<keyword id="KW-1185">Reference proteome</keyword>
<sequence length="206" mass="23077">MAVPRWAVRDLTQISSARELSLRLEQARNDFRATVGSICYFNASARTPGQFDDEYIMTDQSLTYVYADGVTAQSCAMNRLLPSSSSNFGAAATAIPPWLLDPPRLNRLLREGTDEGGLVNYYEGPHKNAFFLAIMRSCIFVRPGADEINGVSYDFFARSGNYTEQAEEEEEEEEEEEEEEVLDREFQLGNLVSYPIIAWGSCPNSA</sequence>
<reference key="1">
    <citation type="journal article" date="1992" name="Mol. Gen. Genet.">
        <title>Organization and functional analysis of three T-DNAs from the vitopine Ti plasmid pTiS4.</title>
        <authorList>
            <person name="Canaday J."/>
            <person name="Gerard J.-C."/>
            <person name="Crouzet P."/>
            <person name="Otten L."/>
        </authorList>
    </citation>
    <scope>NUCLEOTIDE SEQUENCE [GENOMIC DNA]</scope>
</reference>
<reference key="2">
    <citation type="journal article" date="2009" name="J. Bacteriol.">
        <title>Genome sequences of three Agrobacterium biovars help elucidate the evolution of multichromosome genomes in bacteria.</title>
        <authorList>
            <person name="Slater S.C."/>
            <person name="Goldman B.S."/>
            <person name="Goodner B."/>
            <person name="Setubal J.C."/>
            <person name="Farrand S.K."/>
            <person name="Nester E.W."/>
            <person name="Burr T.J."/>
            <person name="Banta L."/>
            <person name="Dickerman A.W."/>
            <person name="Paulsen I."/>
            <person name="Otten L."/>
            <person name="Suen G."/>
            <person name="Welch R."/>
            <person name="Almeida N.F."/>
            <person name="Arnold F."/>
            <person name="Burton O.T."/>
            <person name="Du Z."/>
            <person name="Ewing A."/>
            <person name="Godsy E."/>
            <person name="Heisel S."/>
            <person name="Houmiel K.L."/>
            <person name="Jhaveri J."/>
            <person name="Lu J."/>
            <person name="Miller N.M."/>
            <person name="Norton S."/>
            <person name="Chen Q."/>
            <person name="Phoolcharoen W."/>
            <person name="Ohlin V."/>
            <person name="Ondrusek D."/>
            <person name="Pride N."/>
            <person name="Stricklin S.L."/>
            <person name="Sun J."/>
            <person name="Wheeler C."/>
            <person name="Wilson L."/>
            <person name="Zhu H."/>
            <person name="Wood D.W."/>
        </authorList>
    </citation>
    <scope>NUCLEOTIDE SEQUENCE [LARGE SCALE GENOMIC DNA]</scope>
    <source>
        <strain>ATCC BAA-846 / DSM 112012 / S4</strain>
    </source>
</reference>
<accession>Q04551</accession>
<accession>B9K443</accession>
<evidence type="ECO:0000256" key="1">
    <source>
        <dbReference type="SAM" id="MobiDB-lite"/>
    </source>
</evidence>
<name>6B1_ALLAM</name>
<protein>
    <recommendedName>
        <fullName>Protein 6b</fullName>
    </recommendedName>
</protein>
<gene>
    <name type="primary">6b</name>
    <name type="ordered locus">Avi_8269</name>
</gene>
<organism>
    <name type="scientific">Allorhizobium ampelinum (strain ATCC BAA-846 / DSM 112012 / S4)</name>
    <name type="common">Agrobacterium vitis (strain S4)</name>
    <dbReference type="NCBI Taxonomy" id="311402"/>
    <lineage>
        <taxon>Bacteria</taxon>
        <taxon>Pseudomonadati</taxon>
        <taxon>Pseudomonadota</taxon>
        <taxon>Alphaproteobacteria</taxon>
        <taxon>Hyphomicrobiales</taxon>
        <taxon>Rhizobiaceae</taxon>
        <taxon>Rhizobium/Agrobacterium group</taxon>
        <taxon>Allorhizobium</taxon>
        <taxon>Allorhizobium ampelinum</taxon>
    </lineage>
</organism>
<geneLocation type="plasmid">
    <name>pTiS4</name>
</geneLocation>